<sequence>MIALSALLTKYTIGIMSNLSNGNSNNNNQQQQQQQQGQNPQQPAQNEGGAGAEFVAPPPGLGAAVGVAAMQQRNRLLQQQQQQHHHHQNPAAEGSGLERGSCLLRYASQNSLDESSQKHVQRPNGKERGTVGQYSNEQHTARSFDAMNEMRKQKQLCDVILVADDVEIHAHRMVLASCSPYFYAMFTSFEESRQARITLQSVDARALELLIDYVYTATVEVNEDNVQVLLTAANLLQLTDVRDACCDFLQTQLDASNCLGIREFADIHACVELLNYAETYIEQHFNEVIQFDEFLNLSHEQVISLIGNDRISVPNEERVYECVIAWLRYDVPMREQFTSLLMEHVRLPFLSKEYITQRVDKEILLEGNIVCKNLIIEALTYHLLPTETKSARTVPRKPVGMPKILLVIGGQAPKAIRSVEWYDLREEKWYQAAEMPNRRCRSGLSVLGDKVYAVGGFNGSLRVRTVDVYDPATDQWANCSNMEARRSTLGVAVLNGCIYAVGGFDGTTGLSSAEMYDPKTDIWRFIASMSTRRSSVGVGVVHGLLYAVGGYDGFTRQCLSSVERYNPDTDTWVNVAEMSSRRSGAGVGVLNNILYAVGGHDGPMVRRSVEAYDCETNSWRSVADMSYCRRNAGVVAHDGLLYVVGGDDGTSNLASVEVYCPDSDSWRILPALMTIGRSYAGVCMIDKPMUMEEQGALARQAASLAIALLDDENSQAEGTMEGAIGGAIYGNLAPAGGAAAAAAPAAPAQAPQPNHPHYENIYAPIGQPSNNNNNSGSNSNQAAAIANANAPANAEEIQQQQQPAPTEPNANNNPQPPTAAAPAPSQQQQQQQAQPQQPQRILPMNNYRNDLYDRSAAGGVCSAYDVPRAVRSGLGYRRNFRIDMQNGNRCGSGLRCTPLYTNSRSNCQRQRSFDDTESTDGYNLPYAGAGTMRYENIYEQIRDEPLYRTSAANRVPLYTRLDVLGHGIGRIERHLSSSCGNIDHYNLGGHYAVLGHSHFGTVGHIRLNANGSGVAAPGVAGTGTCNVPNCQGYMTAAGSTVPVEYANVKVPVKNSASSFFSCLHGENSQSMTNIYKTSGTAAAMAAHNSPLTPNVSMERASRSASAGAAGSAAAAVEEHSAADSIPSSSNINANRTTGAIPKVKTANKPAKESGGSSTAASPILDKTTSTGSGKSVTLAKKTSTAAARSSSSGDTNGNGTLNRISKSSLQWLLVNKWLPLWIGQGPDCKVIDFNFMFSRDCVSCDTASVASQMSNPYGTPRLSGLPQDMVRFQSSCAGACAAAGAASTIRRDANASARPLHSTLSRLRNGEKRNPNRVAGNYQYEDPSYENVHVQWQNGFEFGRSRDYDPNSTYHQQRPLLQRARSESPTFSNQQRRLQRQGAQAQQQSQQPKPPGSPDPYKNYKLNADNNTFKPKPIAADELEGAVGGAVAEIALPEVDIEVVDPVSLSDNETETTSSQNNLPSTTNSNNLNEHND</sequence>
<proteinExistence type="evidence at protein level"/>
<feature type="chain" id="PRO_0000016651" description="Ring canal kelch protein">
    <location>
        <begin position="1"/>
        <end position="1477"/>
    </location>
</feature>
<feature type="chain" id="PRO_0000016652" description="Kelch short protein">
    <location>
        <begin position="1"/>
        <end position="689"/>
    </location>
</feature>
<feature type="domain" description="BTB" evidence="1">
    <location>
        <begin position="157"/>
        <end position="223"/>
    </location>
</feature>
<feature type="repeat" description="Kelch 1">
    <location>
        <begin position="404"/>
        <end position="449"/>
    </location>
</feature>
<feature type="repeat" description="Kelch 2">
    <location>
        <begin position="450"/>
        <end position="496"/>
    </location>
</feature>
<feature type="repeat" description="Kelch 3">
    <location>
        <begin position="498"/>
        <end position="543"/>
    </location>
</feature>
<feature type="repeat" description="Kelch 4">
    <location>
        <begin position="545"/>
        <end position="592"/>
    </location>
</feature>
<feature type="repeat" description="Kelch 5">
    <location>
        <begin position="594"/>
        <end position="639"/>
    </location>
</feature>
<feature type="repeat" description="Kelch 6">
    <location>
        <begin position="641"/>
        <end position="687"/>
    </location>
</feature>
<feature type="region of interest" description="Disordered" evidence="2">
    <location>
        <begin position="19"/>
        <end position="62"/>
    </location>
</feature>
<feature type="region of interest" description="Disordered" evidence="2">
    <location>
        <begin position="76"/>
        <end position="96"/>
    </location>
</feature>
<feature type="region of interest" description="Disordered" evidence="2">
    <location>
        <begin position="108"/>
        <end position="137"/>
    </location>
</feature>
<feature type="region of interest" description="Disordered" evidence="2">
    <location>
        <begin position="744"/>
        <end position="841"/>
    </location>
</feature>
<feature type="region of interest" description="Disordered" evidence="2">
    <location>
        <begin position="1119"/>
        <end position="1200"/>
    </location>
</feature>
<feature type="region of interest" description="Disordered" evidence="2">
    <location>
        <begin position="1291"/>
        <end position="1326"/>
    </location>
</feature>
<feature type="region of interest" description="Disordered" evidence="2">
    <location>
        <begin position="1359"/>
        <end position="1416"/>
    </location>
</feature>
<feature type="region of interest" description="Disordered" evidence="2">
    <location>
        <begin position="1446"/>
        <end position="1477"/>
    </location>
</feature>
<feature type="compositionally biased region" description="Low complexity" evidence="2">
    <location>
        <begin position="20"/>
        <end position="46"/>
    </location>
</feature>
<feature type="compositionally biased region" description="Low complexity" evidence="2">
    <location>
        <begin position="763"/>
        <end position="813"/>
    </location>
</feature>
<feature type="compositionally biased region" description="Low complexity" evidence="2">
    <location>
        <begin position="820"/>
        <end position="839"/>
    </location>
</feature>
<feature type="compositionally biased region" description="Polar residues" evidence="2">
    <location>
        <begin position="1125"/>
        <end position="1137"/>
    </location>
</feature>
<feature type="compositionally biased region" description="Low complexity" evidence="2">
    <location>
        <begin position="1166"/>
        <end position="1192"/>
    </location>
</feature>
<feature type="compositionally biased region" description="Low complexity" evidence="2">
    <location>
        <begin position="1374"/>
        <end position="1391"/>
    </location>
</feature>
<feature type="compositionally biased region" description="Low complexity" evidence="2">
    <location>
        <begin position="1456"/>
        <end position="1477"/>
    </location>
</feature>
<feature type="non-standard amino acid" description="Selenocysteine" evidence="6">
    <location>
        <position position="690"/>
    </location>
</feature>
<feature type="modified residue" description="Phosphoserine" evidence="3">
    <location>
        <position position="108"/>
    </location>
</feature>
<feature type="modified residue" description="Phosphoserine" evidence="3">
    <location>
        <position position="111"/>
    </location>
</feature>
<feature type="sequence conflict" description="In Ref. 1; AAA53471/AAA53472." evidence="6" ref="1">
    <original>V</original>
    <variation>A</variation>
    <location>
        <position position="493"/>
    </location>
</feature>
<feature type="sequence conflict" description="In Ref. 1; AAA53471/AAA53472." evidence="6" ref="1">
    <original>A</original>
    <variation>R</variation>
    <location>
        <position position="596"/>
    </location>
</feature>
<feature type="sequence conflict" description="In Ref. 1; AAA53472." evidence="6" ref="1">
    <original>P</original>
    <variation>L</variation>
    <location>
        <position position="824"/>
    </location>
</feature>
<feature type="sequence conflict" description="In Ref. 1; AAA53472." evidence="6" ref="1">
    <original>G</original>
    <variation>D</variation>
    <location>
        <position position="858"/>
    </location>
</feature>
<feature type="sequence conflict" description="In Ref. 1; AAA53472." evidence="6" ref="1">
    <original>A</original>
    <variation>R</variation>
    <location>
        <position position="1083"/>
    </location>
</feature>
<feature type="sequence conflict" description="In Ref. 1; AAA53472." evidence="6" ref="1">
    <original>A</original>
    <variation>G</variation>
    <location>
        <position position="1086"/>
    </location>
</feature>
<keyword id="KW-0009">Actin-binding</keyword>
<keyword id="KW-0963">Cytoplasm</keyword>
<keyword id="KW-0206">Cytoskeleton</keyword>
<keyword id="KW-0217">Developmental protein</keyword>
<keyword id="KW-0221">Differentiation</keyword>
<keyword id="KW-0880">Kelch repeat</keyword>
<keyword id="KW-0896">Oogenesis</keyword>
<keyword id="KW-0597">Phosphoprotein</keyword>
<keyword id="KW-1185">Reference proteome</keyword>
<keyword id="KW-0677">Repeat</keyword>
<keyword id="KW-0712">Selenocysteine</keyword>
<name>KELC_DROME</name>
<protein>
    <recommendedName>
        <fullName>Ring canal kelch protein</fullName>
    </recommendedName>
    <component>
        <recommendedName>
            <fullName>Kelch short protein</fullName>
        </recommendedName>
    </component>
</protein>
<gene>
    <name type="primary">kel</name>
    <name type="ORF">CG7210</name>
</gene>
<reference key="1">
    <citation type="journal article" date="1993" name="Cell">
        <title>Kelch encodes a component of intercellular bridges in Drosophila egg chambers.</title>
        <authorList>
            <person name="Xue F."/>
            <person name="Cooley L."/>
        </authorList>
    </citation>
    <scope>NUCLEOTIDE SEQUENCE [MRNA]</scope>
    <scope>FUNCTION</scope>
    <scope>SUBCELLULAR LOCATION</scope>
    <source>
        <tissue>Embryo</tissue>
    </source>
</reference>
<reference key="2">
    <citation type="journal article" date="2000" name="Science">
        <title>The genome sequence of Drosophila melanogaster.</title>
        <authorList>
            <person name="Adams M.D."/>
            <person name="Celniker S.E."/>
            <person name="Holt R.A."/>
            <person name="Evans C.A."/>
            <person name="Gocayne J.D."/>
            <person name="Amanatides P.G."/>
            <person name="Scherer S.E."/>
            <person name="Li P.W."/>
            <person name="Hoskins R.A."/>
            <person name="Galle R.F."/>
            <person name="George R.A."/>
            <person name="Lewis S.E."/>
            <person name="Richards S."/>
            <person name="Ashburner M."/>
            <person name="Henderson S.N."/>
            <person name="Sutton G.G."/>
            <person name="Wortman J.R."/>
            <person name="Yandell M.D."/>
            <person name="Zhang Q."/>
            <person name="Chen L.X."/>
            <person name="Brandon R.C."/>
            <person name="Rogers Y.-H.C."/>
            <person name="Blazej R.G."/>
            <person name="Champe M."/>
            <person name="Pfeiffer B.D."/>
            <person name="Wan K.H."/>
            <person name="Doyle C."/>
            <person name="Baxter E.G."/>
            <person name="Helt G."/>
            <person name="Nelson C.R."/>
            <person name="Miklos G.L.G."/>
            <person name="Abril J.F."/>
            <person name="Agbayani A."/>
            <person name="An H.-J."/>
            <person name="Andrews-Pfannkoch C."/>
            <person name="Baldwin D."/>
            <person name="Ballew R.M."/>
            <person name="Basu A."/>
            <person name="Baxendale J."/>
            <person name="Bayraktaroglu L."/>
            <person name="Beasley E.M."/>
            <person name="Beeson K.Y."/>
            <person name="Benos P.V."/>
            <person name="Berman B.P."/>
            <person name="Bhandari D."/>
            <person name="Bolshakov S."/>
            <person name="Borkova D."/>
            <person name="Botchan M.R."/>
            <person name="Bouck J."/>
            <person name="Brokstein P."/>
            <person name="Brottier P."/>
            <person name="Burtis K.C."/>
            <person name="Busam D.A."/>
            <person name="Butler H."/>
            <person name="Cadieu E."/>
            <person name="Center A."/>
            <person name="Chandra I."/>
            <person name="Cherry J.M."/>
            <person name="Cawley S."/>
            <person name="Dahlke C."/>
            <person name="Davenport L.B."/>
            <person name="Davies P."/>
            <person name="de Pablos B."/>
            <person name="Delcher A."/>
            <person name="Deng Z."/>
            <person name="Mays A.D."/>
            <person name="Dew I."/>
            <person name="Dietz S.M."/>
            <person name="Dodson K."/>
            <person name="Doup L.E."/>
            <person name="Downes M."/>
            <person name="Dugan-Rocha S."/>
            <person name="Dunkov B.C."/>
            <person name="Dunn P."/>
            <person name="Durbin K.J."/>
            <person name="Evangelista C.C."/>
            <person name="Ferraz C."/>
            <person name="Ferriera S."/>
            <person name="Fleischmann W."/>
            <person name="Fosler C."/>
            <person name="Gabrielian A.E."/>
            <person name="Garg N.S."/>
            <person name="Gelbart W.M."/>
            <person name="Glasser K."/>
            <person name="Glodek A."/>
            <person name="Gong F."/>
            <person name="Gorrell J.H."/>
            <person name="Gu Z."/>
            <person name="Guan P."/>
            <person name="Harris M."/>
            <person name="Harris N.L."/>
            <person name="Harvey D.A."/>
            <person name="Heiman T.J."/>
            <person name="Hernandez J.R."/>
            <person name="Houck J."/>
            <person name="Hostin D."/>
            <person name="Houston K.A."/>
            <person name="Howland T.J."/>
            <person name="Wei M.-H."/>
            <person name="Ibegwam C."/>
            <person name="Jalali M."/>
            <person name="Kalush F."/>
            <person name="Karpen G.H."/>
            <person name="Ke Z."/>
            <person name="Kennison J.A."/>
            <person name="Ketchum K.A."/>
            <person name="Kimmel B.E."/>
            <person name="Kodira C.D."/>
            <person name="Kraft C.L."/>
            <person name="Kravitz S."/>
            <person name="Kulp D."/>
            <person name="Lai Z."/>
            <person name="Lasko P."/>
            <person name="Lei Y."/>
            <person name="Levitsky A.A."/>
            <person name="Li J.H."/>
            <person name="Li Z."/>
            <person name="Liang Y."/>
            <person name="Lin X."/>
            <person name="Liu X."/>
            <person name="Mattei B."/>
            <person name="McIntosh T.C."/>
            <person name="McLeod M.P."/>
            <person name="McPherson D."/>
            <person name="Merkulov G."/>
            <person name="Milshina N.V."/>
            <person name="Mobarry C."/>
            <person name="Morris J."/>
            <person name="Moshrefi A."/>
            <person name="Mount S.M."/>
            <person name="Moy M."/>
            <person name="Murphy B."/>
            <person name="Murphy L."/>
            <person name="Muzny D.M."/>
            <person name="Nelson D.L."/>
            <person name="Nelson D.R."/>
            <person name="Nelson K.A."/>
            <person name="Nixon K."/>
            <person name="Nusskern D.R."/>
            <person name="Pacleb J.M."/>
            <person name="Palazzolo M."/>
            <person name="Pittman G.S."/>
            <person name="Pan S."/>
            <person name="Pollard J."/>
            <person name="Puri V."/>
            <person name="Reese M.G."/>
            <person name="Reinert K."/>
            <person name="Remington K."/>
            <person name="Saunders R.D.C."/>
            <person name="Scheeler F."/>
            <person name="Shen H."/>
            <person name="Shue B.C."/>
            <person name="Siden-Kiamos I."/>
            <person name="Simpson M."/>
            <person name="Skupski M.P."/>
            <person name="Smith T.J."/>
            <person name="Spier E."/>
            <person name="Spradling A.C."/>
            <person name="Stapleton M."/>
            <person name="Strong R."/>
            <person name="Sun E."/>
            <person name="Svirskas R."/>
            <person name="Tector C."/>
            <person name="Turner R."/>
            <person name="Venter E."/>
            <person name="Wang A.H."/>
            <person name="Wang X."/>
            <person name="Wang Z.-Y."/>
            <person name="Wassarman D.A."/>
            <person name="Weinstock G.M."/>
            <person name="Weissenbach J."/>
            <person name="Williams S.M."/>
            <person name="Woodage T."/>
            <person name="Worley K.C."/>
            <person name="Wu D."/>
            <person name="Yang S."/>
            <person name="Yao Q.A."/>
            <person name="Ye J."/>
            <person name="Yeh R.-F."/>
            <person name="Zaveri J.S."/>
            <person name="Zhan M."/>
            <person name="Zhang G."/>
            <person name="Zhao Q."/>
            <person name="Zheng L."/>
            <person name="Zheng X.H."/>
            <person name="Zhong F.N."/>
            <person name="Zhong W."/>
            <person name="Zhou X."/>
            <person name="Zhu S.C."/>
            <person name="Zhu X."/>
            <person name="Smith H.O."/>
            <person name="Gibbs R.A."/>
            <person name="Myers E.W."/>
            <person name="Rubin G.M."/>
            <person name="Venter J.C."/>
        </authorList>
    </citation>
    <scope>NUCLEOTIDE SEQUENCE [LARGE SCALE GENOMIC DNA]</scope>
    <source>
        <strain>Berkeley</strain>
    </source>
</reference>
<reference key="3">
    <citation type="journal article" date="2002" name="Genome Biol.">
        <title>Annotation of the Drosophila melanogaster euchromatic genome: a systematic review.</title>
        <authorList>
            <person name="Misra S."/>
            <person name="Crosby M.A."/>
            <person name="Mungall C.J."/>
            <person name="Matthews B.B."/>
            <person name="Campbell K.S."/>
            <person name="Hradecky P."/>
            <person name="Huang Y."/>
            <person name="Kaminker J.S."/>
            <person name="Millburn G.H."/>
            <person name="Prochnik S.E."/>
            <person name="Smith C.D."/>
            <person name="Tupy J.L."/>
            <person name="Whitfield E.J."/>
            <person name="Bayraktaroglu L."/>
            <person name="Berman B.P."/>
            <person name="Bettencourt B.R."/>
            <person name="Celniker S.E."/>
            <person name="de Grey A.D.N.J."/>
            <person name="Drysdale R.A."/>
            <person name="Harris N.L."/>
            <person name="Richter J."/>
            <person name="Russo S."/>
            <person name="Schroeder A.J."/>
            <person name="Shu S.Q."/>
            <person name="Stapleton M."/>
            <person name="Yamada C."/>
            <person name="Ashburner M."/>
            <person name="Gelbart W.M."/>
            <person name="Rubin G.M."/>
            <person name="Lewis S.E."/>
        </authorList>
    </citation>
    <scope>GENOME REANNOTATION</scope>
    <source>
        <strain>Berkeley</strain>
    </source>
</reference>
<reference key="4">
    <citation type="submission" date="2011-03" db="EMBL/GenBank/DDBJ databases">
        <authorList>
            <person name="Stapleton M."/>
            <person name="Brokstein P."/>
            <person name="Hong L."/>
            <person name="Agbayani A."/>
            <person name="Carlson J.W."/>
            <person name="Champe M."/>
            <person name="Chavez C."/>
            <person name="Dorsett V."/>
            <person name="Dresnek D."/>
            <person name="Farfan D."/>
            <person name="Frise E."/>
            <person name="George R.A."/>
            <person name="Gonzalez M."/>
            <person name="Guarin H."/>
            <person name="Kronmiller B."/>
            <person name="Li P.W."/>
            <person name="Liao G."/>
            <person name="Miranda A."/>
            <person name="Mungall C.J."/>
            <person name="Nunoo J."/>
            <person name="Pacleb J.M."/>
            <person name="Paragas V."/>
            <person name="Park S."/>
            <person name="Patel S."/>
            <person name="Phouanenavong S."/>
            <person name="Wan K.H."/>
            <person name="Yu C."/>
            <person name="Lewis S.E."/>
            <person name="Rubin G.M."/>
            <person name="Celniker S.E."/>
        </authorList>
    </citation>
    <scope>NUCLEOTIDE SEQUENCE [LARGE SCALE MRNA]</scope>
    <source>
        <strain>Berkeley</strain>
        <tissue>Embryo</tissue>
    </source>
</reference>
<reference key="5">
    <citation type="journal article" date="1997" name="Development">
        <title>Examination of the function of two kelch proteins generated by stop codon suppression.</title>
        <authorList>
            <person name="Robinson D.N."/>
            <person name="Cooley L."/>
        </authorList>
    </citation>
    <scope>FUNCTION</scope>
    <scope>SELENOCYSTEINE AT SEC-690</scope>
    <scope>SUBCELLULAR LOCATION</scope>
    <scope>TISSUE SPECIFICITY</scope>
    <scope>DEVELOPMENTAL STAGE</scope>
    <source>
        <tissue>Embryo</tissue>
    </source>
</reference>
<reference key="6">
    <citation type="journal article" date="2008" name="J. Proteome Res.">
        <title>Phosphoproteome analysis of Drosophila melanogaster embryos.</title>
        <authorList>
            <person name="Zhai B."/>
            <person name="Villen J."/>
            <person name="Beausoleil S.A."/>
            <person name="Mintseris J."/>
            <person name="Gygi S.P."/>
        </authorList>
    </citation>
    <scope>PHOSPHORYLATION [LARGE SCALE ANALYSIS] AT SER-108 AND SER-111</scope>
    <scope>IDENTIFICATION BY MASS SPECTROMETRY</scope>
    <source>
        <tissue>Embryo</tissue>
    </source>
</reference>
<accession>Q04652</accession>
<accession>F0JAF0</accession>
<accession>Q04653</accession>
<accession>Q86PA7</accession>
<accession>Q9VJA2</accession>
<dbReference type="EMBL" id="L08483">
    <property type="protein sequence ID" value="AAA53471.1"/>
    <property type="molecule type" value="mRNA"/>
</dbReference>
<dbReference type="EMBL" id="L08483">
    <property type="protein sequence ID" value="AAA53472.2"/>
    <property type="molecule type" value="mRNA"/>
</dbReference>
<dbReference type="EMBL" id="AE014134">
    <property type="protein sequence ID" value="AAF53651.1"/>
    <property type="molecule type" value="Genomic_DNA"/>
</dbReference>
<dbReference type="EMBL" id="AE014134">
    <property type="protein sequence ID" value="AAN11182.3"/>
    <property type="molecule type" value="Genomic_DNA"/>
</dbReference>
<dbReference type="EMBL" id="BT003250">
    <property type="protein sequence ID" value="ADZ05867.1"/>
    <property type="status" value="ALT_SEQ"/>
    <property type="molecule type" value="mRNA"/>
</dbReference>
<dbReference type="PIR" id="A45773">
    <property type="entry name" value="A45773"/>
</dbReference>
<dbReference type="RefSeq" id="NP_476589.4">
    <property type="nucleotide sequence ID" value="NM_057241.3"/>
</dbReference>
<dbReference type="RefSeq" id="NP_724095.1">
    <property type="nucleotide sequence ID" value="NM_165242.2"/>
</dbReference>
<dbReference type="BioGRID" id="61080">
    <property type="interactions" value="62"/>
</dbReference>
<dbReference type="FunCoup" id="Q04652">
    <property type="interactions" value="4"/>
</dbReference>
<dbReference type="IntAct" id="Q04652">
    <property type="interactions" value="2"/>
</dbReference>
<dbReference type="STRING" id="7227.FBpp0080596"/>
<dbReference type="GlyGen" id="Q04652">
    <property type="glycosylation" value="1 site"/>
</dbReference>
<dbReference type="iPTMnet" id="Q04652"/>
<dbReference type="PaxDb" id="7227-FBpp0080595"/>
<dbReference type="DNASU" id="35084"/>
<dbReference type="GeneID" id="35084"/>
<dbReference type="KEGG" id="dme:Dmel_CG7210"/>
<dbReference type="UCSC" id="CG7210-RA">
    <property type="organism name" value="d. melanogaster"/>
</dbReference>
<dbReference type="AGR" id="FB:FBgn0001301"/>
<dbReference type="CTD" id="3792"/>
<dbReference type="FlyBase" id="FBgn0001301">
    <property type="gene designation" value="kel"/>
</dbReference>
<dbReference type="VEuPathDB" id="VectorBase:FBgn0001301"/>
<dbReference type="eggNOG" id="KOG4441">
    <property type="taxonomic scope" value="Eukaryota"/>
</dbReference>
<dbReference type="HOGENOM" id="CLU_004193_1_0_1"/>
<dbReference type="InParanoid" id="Q04652"/>
<dbReference type="OMA" id="DMVRYQS"/>
<dbReference type="OrthoDB" id="45365at2759"/>
<dbReference type="Reactome" id="R-DME-8951664">
    <property type="pathway name" value="Neddylation"/>
</dbReference>
<dbReference type="Reactome" id="R-DME-983168">
    <property type="pathway name" value="Antigen processing: Ubiquitination &amp; Proteasome degradation"/>
</dbReference>
<dbReference type="BioGRID-ORCS" id="35084">
    <property type="hits" value="0 hits in 3 CRISPR screens"/>
</dbReference>
<dbReference type="ChiTaRS" id="kel">
    <property type="organism name" value="fly"/>
</dbReference>
<dbReference type="GenomeRNAi" id="35084"/>
<dbReference type="PRO" id="PR:Q04652"/>
<dbReference type="Proteomes" id="UP000000803">
    <property type="component" value="Chromosome 2L"/>
</dbReference>
<dbReference type="GO" id="GO:0031463">
    <property type="term" value="C:Cul3-RING ubiquitin ligase complex"/>
    <property type="evidence" value="ECO:0000318"/>
    <property type="project" value="GO_Central"/>
</dbReference>
<dbReference type="GO" id="GO:0005737">
    <property type="term" value="C:cytoplasm"/>
    <property type="evidence" value="ECO:0000318"/>
    <property type="project" value="GO_Central"/>
</dbReference>
<dbReference type="GO" id="GO:0005856">
    <property type="term" value="C:cytoskeleton"/>
    <property type="evidence" value="ECO:0007669"/>
    <property type="project" value="UniProtKB-SubCell"/>
</dbReference>
<dbReference type="GO" id="GO:0035324">
    <property type="term" value="C:female germline ring canal"/>
    <property type="evidence" value="ECO:0000314"/>
    <property type="project" value="FlyBase"/>
</dbReference>
<dbReference type="GO" id="GO:0035183">
    <property type="term" value="C:female germline ring canal inner rim"/>
    <property type="evidence" value="ECO:0000304"/>
    <property type="project" value="FlyBase"/>
</dbReference>
<dbReference type="GO" id="GO:0045172">
    <property type="term" value="C:germline ring canal"/>
    <property type="evidence" value="ECO:0000314"/>
    <property type="project" value="FlyBase"/>
</dbReference>
<dbReference type="GO" id="GO:0003779">
    <property type="term" value="F:actin binding"/>
    <property type="evidence" value="ECO:0000314"/>
    <property type="project" value="FlyBase"/>
</dbReference>
<dbReference type="GO" id="GO:1990756">
    <property type="term" value="F:ubiquitin-like ligase-substrate adaptor activity"/>
    <property type="evidence" value="ECO:0000318"/>
    <property type="project" value="GO_Central"/>
</dbReference>
<dbReference type="GO" id="GO:0030036">
    <property type="term" value="P:actin cytoskeleton organization"/>
    <property type="evidence" value="ECO:0000315"/>
    <property type="project" value="FlyBase"/>
</dbReference>
<dbReference type="GO" id="GO:0007349">
    <property type="term" value="P:cellularization"/>
    <property type="evidence" value="ECO:0000315"/>
    <property type="project" value="FlyBase"/>
</dbReference>
<dbReference type="GO" id="GO:0007301">
    <property type="term" value="P:female germline ring canal formation"/>
    <property type="evidence" value="ECO:0000314"/>
    <property type="project" value="FlyBase"/>
</dbReference>
<dbReference type="GO" id="GO:0007297">
    <property type="term" value="P:follicle cell of egg chamber migration"/>
    <property type="evidence" value="ECO:0007001"/>
    <property type="project" value="FlyBase"/>
</dbReference>
<dbReference type="GO" id="GO:0030717">
    <property type="term" value="P:oocyte karyosome formation"/>
    <property type="evidence" value="ECO:0000315"/>
    <property type="project" value="FlyBase"/>
</dbReference>
<dbReference type="GO" id="GO:0048477">
    <property type="term" value="P:oogenesis"/>
    <property type="evidence" value="ECO:0000315"/>
    <property type="project" value="FlyBase"/>
</dbReference>
<dbReference type="GO" id="GO:0030723">
    <property type="term" value="P:ovarian fusome organization"/>
    <property type="evidence" value="ECO:0000315"/>
    <property type="project" value="FlyBase"/>
</dbReference>
<dbReference type="GO" id="GO:0007300">
    <property type="term" value="P:ovarian nurse cell to oocyte transport"/>
    <property type="evidence" value="ECO:0000315"/>
    <property type="project" value="FlyBase"/>
</dbReference>
<dbReference type="GO" id="GO:0043161">
    <property type="term" value="P:proteasome-mediated ubiquitin-dependent protein catabolic process"/>
    <property type="evidence" value="ECO:0000318"/>
    <property type="project" value="GO_Central"/>
</dbReference>
<dbReference type="CDD" id="cd18235">
    <property type="entry name" value="BTB_POZ_KLHL2-like"/>
    <property type="match status" value="1"/>
</dbReference>
<dbReference type="FunFam" id="1.25.40.420:FF:000001">
    <property type="entry name" value="Kelch-like family member 12"/>
    <property type="match status" value="1"/>
</dbReference>
<dbReference type="FunFam" id="2.120.10.80:FF:000002">
    <property type="entry name" value="Kelch-like family member 2"/>
    <property type="match status" value="1"/>
</dbReference>
<dbReference type="FunFam" id="3.30.710.10:FF:000001">
    <property type="entry name" value="Kelch-like family member 20"/>
    <property type="match status" value="1"/>
</dbReference>
<dbReference type="Gene3D" id="1.25.40.420">
    <property type="match status" value="1"/>
</dbReference>
<dbReference type="Gene3D" id="2.120.10.80">
    <property type="entry name" value="Kelch-type beta propeller"/>
    <property type="match status" value="1"/>
</dbReference>
<dbReference type="Gene3D" id="3.30.710.10">
    <property type="entry name" value="Potassium Channel Kv1.1, Chain A"/>
    <property type="match status" value="1"/>
</dbReference>
<dbReference type="InterPro" id="IPR011705">
    <property type="entry name" value="BACK"/>
</dbReference>
<dbReference type="InterPro" id="IPR000210">
    <property type="entry name" value="BTB/POZ_dom"/>
</dbReference>
<dbReference type="InterPro" id="IPR015915">
    <property type="entry name" value="Kelch-typ_b-propeller"/>
</dbReference>
<dbReference type="InterPro" id="IPR006652">
    <property type="entry name" value="Kelch_1"/>
</dbReference>
<dbReference type="InterPro" id="IPR011333">
    <property type="entry name" value="SKP1/BTB/POZ_sf"/>
</dbReference>
<dbReference type="PANTHER" id="PTHR24412">
    <property type="entry name" value="KELCH PROTEIN"/>
    <property type="match status" value="1"/>
</dbReference>
<dbReference type="PANTHER" id="PTHR24412:SF466">
    <property type="entry name" value="RING CANAL KELCH PROTEIN"/>
    <property type="match status" value="1"/>
</dbReference>
<dbReference type="Pfam" id="PF07707">
    <property type="entry name" value="BACK"/>
    <property type="match status" value="1"/>
</dbReference>
<dbReference type="Pfam" id="PF00651">
    <property type="entry name" value="BTB"/>
    <property type="match status" value="1"/>
</dbReference>
<dbReference type="Pfam" id="PF01344">
    <property type="entry name" value="Kelch_1"/>
    <property type="match status" value="6"/>
</dbReference>
<dbReference type="SMART" id="SM00875">
    <property type="entry name" value="BACK"/>
    <property type="match status" value="1"/>
</dbReference>
<dbReference type="SMART" id="SM00225">
    <property type="entry name" value="BTB"/>
    <property type="match status" value="1"/>
</dbReference>
<dbReference type="SMART" id="SM00612">
    <property type="entry name" value="Kelch"/>
    <property type="match status" value="6"/>
</dbReference>
<dbReference type="SUPFAM" id="SSF117281">
    <property type="entry name" value="Kelch motif"/>
    <property type="match status" value="1"/>
</dbReference>
<dbReference type="SUPFAM" id="SSF54695">
    <property type="entry name" value="POZ domain"/>
    <property type="match status" value="1"/>
</dbReference>
<dbReference type="PROSITE" id="PS50097">
    <property type="entry name" value="BTB"/>
    <property type="match status" value="1"/>
</dbReference>
<evidence type="ECO:0000255" key="1">
    <source>
        <dbReference type="PROSITE-ProRule" id="PRU00037"/>
    </source>
</evidence>
<evidence type="ECO:0000256" key="2">
    <source>
        <dbReference type="SAM" id="MobiDB-lite"/>
    </source>
</evidence>
<evidence type="ECO:0000269" key="3">
    <source>
    </source>
</evidence>
<evidence type="ECO:0000269" key="4">
    <source>
    </source>
</evidence>
<evidence type="ECO:0000269" key="5">
    <source>
    </source>
</evidence>
<evidence type="ECO:0000305" key="6"/>
<comment type="function">
    <text evidence="4 5">Component of ring canals that regulates the flow of cytoplasm between cells. May be involved in the regulation of cytoplasm flow from nurse cells to the oocyte during oogenesis. Binds actin.</text>
</comment>
<comment type="subcellular location">
    <subcellularLocation>
        <location evidence="4 5">Cytoplasm</location>
        <location evidence="4 5">Cytoskeleton</location>
    </subcellularLocation>
    <text>Inner surface of cytoplasmic bridges or ring canals present in egg chambers. Subcortically in imaginal disk epithelia.</text>
</comment>
<comment type="tissue specificity">
    <text evidence="5">Both proteins are expressed in ovaries, male testis, ovariectomized females, cuticle, salivary gland and imaginal disks. Kelch short protein is the predominant form and is also expressed in fat bodies. On entry into metamorphosis levels of full-length protein increase in testis and imaginal disks.</text>
</comment>
<comment type="developmental stage">
    <text evidence="5">Larvae, pupae and adults.</text>
</comment>
<comment type="sequence caution" evidence="6">
    <conflict type="erroneous termination">
        <sequence resource="EMBL-CDS" id="ADZ05867"/>
    </conflict>
    <text>Truncated C-terminus.</text>
</comment>
<organism>
    <name type="scientific">Drosophila melanogaster</name>
    <name type="common">Fruit fly</name>
    <dbReference type="NCBI Taxonomy" id="7227"/>
    <lineage>
        <taxon>Eukaryota</taxon>
        <taxon>Metazoa</taxon>
        <taxon>Ecdysozoa</taxon>
        <taxon>Arthropoda</taxon>
        <taxon>Hexapoda</taxon>
        <taxon>Insecta</taxon>
        <taxon>Pterygota</taxon>
        <taxon>Neoptera</taxon>
        <taxon>Endopterygota</taxon>
        <taxon>Diptera</taxon>
        <taxon>Brachycera</taxon>
        <taxon>Muscomorpha</taxon>
        <taxon>Ephydroidea</taxon>
        <taxon>Drosophilidae</taxon>
        <taxon>Drosophila</taxon>
        <taxon>Sophophora</taxon>
    </lineage>
</organism>